<name>RNP4_PYRHO</name>
<gene>
    <name evidence="1" type="primary">rnp4</name>
    <name type="ordered locus">PH1601</name>
</gene>
<reference key="1">
    <citation type="journal article" date="1998" name="DNA Res.">
        <title>Complete sequence and gene organization of the genome of a hyper-thermophilic archaebacterium, Pyrococcus horikoshii OT3.</title>
        <authorList>
            <person name="Kawarabayasi Y."/>
            <person name="Sawada M."/>
            <person name="Horikawa H."/>
            <person name="Haikawa Y."/>
            <person name="Hino Y."/>
            <person name="Yamamoto S."/>
            <person name="Sekine M."/>
            <person name="Baba S."/>
            <person name="Kosugi H."/>
            <person name="Hosoyama A."/>
            <person name="Nagai Y."/>
            <person name="Sakai M."/>
            <person name="Ogura K."/>
            <person name="Otsuka R."/>
            <person name="Nakazawa H."/>
            <person name="Takamiya M."/>
            <person name="Ohfuku Y."/>
            <person name="Funahashi T."/>
            <person name="Tanaka T."/>
            <person name="Kudoh Y."/>
            <person name="Yamazaki J."/>
            <person name="Kushida N."/>
            <person name="Oguchi A."/>
            <person name="Aoki K."/>
            <person name="Yoshizawa T."/>
            <person name="Nakamura Y."/>
            <person name="Robb F.T."/>
            <person name="Horikoshi K."/>
            <person name="Masuchi Y."/>
            <person name="Shizuya H."/>
            <person name="Kikuchi H."/>
        </authorList>
    </citation>
    <scope>NUCLEOTIDE SEQUENCE [LARGE SCALE GENOMIC DNA]</scope>
    <source>
        <strain>ATCC 700860 / DSM 12428 / JCM 9974 / NBRC 100139 / OT-3</strain>
    </source>
</reference>
<reference key="2">
    <citation type="journal article" date="2003" name="Biochem. Biophys. Res. Commun.">
        <title>Reconstitution of archaeal ribonuclease P from RNA and four protein components.</title>
        <authorList>
            <person name="Kouzuma Y."/>
            <person name="Mizoguchi M."/>
            <person name="Takagi H."/>
            <person name="Fukuhara H."/>
            <person name="Tsukamoto M."/>
            <person name="Numata T."/>
            <person name="Kimura M."/>
        </authorList>
    </citation>
    <scope>FUNCTION</scope>
    <scope>BIOPHYSICOCHEMICAL PROPERTIES</scope>
    <scope>SUBUNIT</scope>
    <scope>RNA-BINDING</scope>
    <source>
        <strain>ATCC 700860 / DSM 12428 / JCM 9974 / NBRC 100139 / OT-3</strain>
    </source>
</reference>
<reference key="3">
    <citation type="journal article" date="2006" name="Biochem. Biophys. Res. Commun.">
        <title>A fifth protein subunit Ph1496p elevates the optimum temperature for the ribonuclease P activity from Pyrococcus horikoshii OT3.</title>
        <authorList>
            <person name="Fukuhara H."/>
            <person name="Kifusa M."/>
            <person name="Watanabe M."/>
            <person name="Terada A."/>
            <person name="Honda T."/>
            <person name="Numata T."/>
            <person name="Kakuta Y."/>
            <person name="Kimura M."/>
        </authorList>
    </citation>
    <scope>FUNCTION</scope>
    <scope>BIOPHYSICOCHEMICAL PROPERTIES</scope>
    <scope>SUBUNIT</scope>
    <source>
        <strain>ATCC 700860 / DSM 12428 / JCM 9974 / NBRC 100139 / OT-3</strain>
    </source>
</reference>
<reference key="4">
    <citation type="journal article" date="2006" name="J. Biochem.">
        <title>Characterization of the archaeal ribonuclease P proteins from Pyrococcus horikoshii OT3.</title>
        <authorList>
            <person name="Terada A."/>
            <person name="Honda T."/>
            <person name="Fukuhara H."/>
            <person name="Hada K."/>
            <person name="Kimura M."/>
        </authorList>
    </citation>
    <scope>FUNCTION</scope>
    <scope>SUBUNIT</scope>
    <source>
        <strain>ATCC 700860 / DSM 12428 / JCM 9974 / NBRC 100139 / OT-3</strain>
    </source>
</reference>
<reference key="5">
    <citation type="journal article" date="2005" name="Biochemistry">
        <title>Crystal structure of a ribonuclease P protein Ph1601p from Pyrococcus horikoshii OT3: an archaeal homologue of human nuclear ribonuclease P protein Rpp21.</title>
        <authorList>
            <person name="Kakuta Y."/>
            <person name="Ishimatsu I."/>
            <person name="Numata T."/>
            <person name="Kimura K."/>
            <person name="Yao M."/>
            <person name="Tanaka I."/>
            <person name="Kimura M."/>
        </authorList>
    </citation>
    <scope>X-RAY CRYSTALLOGRAPHY (1.6 ANGSTROMS) IN COMPLEX WITH ZN(2+)</scope>
    <scope>FUNCTION</scope>
    <scope>COFACTOR</scope>
    <scope>MUTAGENESIS OF ARG-22; TYR-44; ARG-65; 68-CYS--CYS-71; LYS-69; ARG-84; ARG-86; 97-CYS--CYS-100 AND ARG-105</scope>
    <source>
        <strain>ATCC 700860 / DSM 12428 / JCM 9974 / NBRC 100139 / OT-3</strain>
    </source>
</reference>
<reference key="6">
    <citation type="journal article" date="2008" name="J. Mol. Biol.">
        <title>Structure of an archaeal homolog of the human protein complex Rpp21-Rpp29 that is a key core component for the assembly of active ribonuclease P.</title>
        <authorList>
            <person name="Honda T."/>
            <person name="Kakuta Y."/>
            <person name="Kimura K."/>
            <person name="Saho J."/>
            <person name="Kimura M."/>
        </authorList>
    </citation>
    <scope>X-RAY CRYSTALLOGRAPHY (2.21 ANGSTROMS) IN COMPLEX WITH RNP1 AND ZN(2+)</scope>
    <scope>FUNCTION</scope>
    <scope>COFACTOR</scope>
    <scope>SUBUNIT</scope>
    <source>
        <strain>ATCC 700860 / DSM 12428 / JCM 9974 / NBRC 100139 / OT-3</strain>
    </source>
</reference>
<dbReference type="EC" id="3.1.26.5" evidence="1"/>
<dbReference type="EMBL" id="BA000001">
    <property type="protein sequence ID" value="BAA30713.1"/>
    <property type="molecule type" value="Genomic_DNA"/>
</dbReference>
<dbReference type="PIR" id="A71039">
    <property type="entry name" value="A71039"/>
</dbReference>
<dbReference type="RefSeq" id="WP_010885676.1">
    <property type="nucleotide sequence ID" value="NC_000961.1"/>
</dbReference>
<dbReference type="PDB" id="1X0T">
    <property type="method" value="X-ray"/>
    <property type="resolution" value="1.60 A"/>
    <property type="chains" value="A=1-120"/>
</dbReference>
<dbReference type="PDB" id="2ZAE">
    <property type="method" value="X-ray"/>
    <property type="resolution" value="2.21 A"/>
    <property type="chains" value="B/D=1-120"/>
</dbReference>
<dbReference type="PDBsum" id="1X0T"/>
<dbReference type="PDBsum" id="2ZAE"/>
<dbReference type="SMR" id="O59248"/>
<dbReference type="IntAct" id="O59248">
    <property type="interactions" value="2"/>
</dbReference>
<dbReference type="STRING" id="70601.gene:9378591"/>
<dbReference type="EnsemblBacteria" id="BAA30713">
    <property type="protein sequence ID" value="BAA30713"/>
    <property type="gene ID" value="BAA30713"/>
</dbReference>
<dbReference type="GeneID" id="1442455"/>
<dbReference type="KEGG" id="pho:PH1601"/>
<dbReference type="eggNOG" id="arCOG04345">
    <property type="taxonomic scope" value="Archaea"/>
</dbReference>
<dbReference type="OrthoDB" id="10058at2157"/>
<dbReference type="BRENDA" id="3.1.26.5">
    <property type="organism ID" value="5244"/>
</dbReference>
<dbReference type="EvolutionaryTrace" id="O59248"/>
<dbReference type="Proteomes" id="UP000000752">
    <property type="component" value="Chromosome"/>
</dbReference>
<dbReference type="GO" id="GO:0005737">
    <property type="term" value="C:cytoplasm"/>
    <property type="evidence" value="ECO:0007669"/>
    <property type="project" value="UniProtKB-SubCell"/>
</dbReference>
<dbReference type="GO" id="GO:0030677">
    <property type="term" value="C:ribonuclease P complex"/>
    <property type="evidence" value="ECO:0000314"/>
    <property type="project" value="UniProtKB"/>
</dbReference>
<dbReference type="GO" id="GO:0004526">
    <property type="term" value="F:ribonuclease P activity"/>
    <property type="evidence" value="ECO:0000314"/>
    <property type="project" value="UniProtKB"/>
</dbReference>
<dbReference type="GO" id="GO:0008270">
    <property type="term" value="F:zinc ion binding"/>
    <property type="evidence" value="ECO:0000314"/>
    <property type="project" value="UniProtKB"/>
</dbReference>
<dbReference type="GO" id="GO:0001682">
    <property type="term" value="P:tRNA 5'-leader removal"/>
    <property type="evidence" value="ECO:0000314"/>
    <property type="project" value="UniProtKB"/>
</dbReference>
<dbReference type="FunFam" id="1.20.5.420:FF:000020">
    <property type="entry name" value="Ribonuclease P protein component 4"/>
    <property type="match status" value="1"/>
</dbReference>
<dbReference type="Gene3D" id="6.20.50.20">
    <property type="match status" value="1"/>
</dbReference>
<dbReference type="Gene3D" id="1.20.5.420">
    <property type="entry name" value="Immunoglobulin FC, subunit C"/>
    <property type="match status" value="1"/>
</dbReference>
<dbReference type="HAMAP" id="MF_00757">
    <property type="entry name" value="RNase_P_4"/>
    <property type="match status" value="1"/>
</dbReference>
<dbReference type="InterPro" id="IPR016432">
    <property type="entry name" value="RNP4"/>
</dbReference>
<dbReference type="InterPro" id="IPR007175">
    <property type="entry name" value="Rpr2/Snm1/Rpp21"/>
</dbReference>
<dbReference type="NCBIfam" id="NF003045">
    <property type="entry name" value="PRK03954.1"/>
    <property type="match status" value="1"/>
</dbReference>
<dbReference type="PANTHER" id="PTHR14742:SF0">
    <property type="entry name" value="RIBONUCLEASE P PROTEIN SUBUNIT P21"/>
    <property type="match status" value="1"/>
</dbReference>
<dbReference type="PANTHER" id="PTHR14742">
    <property type="entry name" value="RIBONUCLEASE P SUBUNIT P21"/>
    <property type="match status" value="1"/>
</dbReference>
<dbReference type="Pfam" id="PF04032">
    <property type="entry name" value="Rpr2"/>
    <property type="match status" value="1"/>
</dbReference>
<dbReference type="PIRSF" id="PIRSF004878">
    <property type="entry name" value="RNase_P_4"/>
    <property type="match status" value="1"/>
</dbReference>
<evidence type="ECO:0000255" key="1">
    <source>
        <dbReference type="HAMAP-Rule" id="MF_00757"/>
    </source>
</evidence>
<evidence type="ECO:0000269" key="2">
    <source>
    </source>
</evidence>
<evidence type="ECO:0000269" key="3">
    <source>
    </source>
</evidence>
<evidence type="ECO:0000269" key="4">
    <source>
    </source>
</evidence>
<evidence type="ECO:0000269" key="5">
    <source>
    </source>
</evidence>
<evidence type="ECO:0000269" key="6">
    <source>
    </source>
</evidence>
<evidence type="ECO:0007829" key="7">
    <source>
        <dbReference type="PDB" id="1X0T"/>
    </source>
</evidence>
<organism>
    <name type="scientific">Pyrococcus horikoshii (strain ATCC 700860 / DSM 12428 / JCM 9974 / NBRC 100139 / OT-3)</name>
    <dbReference type="NCBI Taxonomy" id="70601"/>
    <lineage>
        <taxon>Archaea</taxon>
        <taxon>Methanobacteriati</taxon>
        <taxon>Methanobacteriota</taxon>
        <taxon>Thermococci</taxon>
        <taxon>Thermococcales</taxon>
        <taxon>Thermococcaceae</taxon>
        <taxon>Pyrococcus</taxon>
    </lineage>
</organism>
<feature type="chain" id="PRO_0000153860" description="Ribonuclease P protein component 4">
    <location>
        <begin position="1"/>
        <end position="120"/>
    </location>
</feature>
<feature type="binding site">
    <location>
        <position position="68"/>
    </location>
    <ligand>
        <name>Zn(2+)</name>
        <dbReference type="ChEBI" id="CHEBI:29105"/>
    </ligand>
</feature>
<feature type="binding site">
    <location>
        <position position="71"/>
    </location>
    <ligand>
        <name>Zn(2+)</name>
        <dbReference type="ChEBI" id="CHEBI:29105"/>
    </ligand>
</feature>
<feature type="binding site">
    <location>
        <position position="97"/>
    </location>
    <ligand>
        <name>Zn(2+)</name>
        <dbReference type="ChEBI" id="CHEBI:29105"/>
    </ligand>
</feature>
<feature type="binding site">
    <location>
        <position position="100"/>
    </location>
    <ligand>
        <name>Zn(2+)</name>
        <dbReference type="ChEBI" id="CHEBI:29105"/>
    </ligand>
</feature>
<feature type="mutagenesis site" description="40% reconstituted RNase P activity." evidence="3">
    <original>R</original>
    <variation>A</variation>
    <location>
        <position position="22"/>
    </location>
</feature>
<feature type="mutagenesis site" description="40% reconstituted RNase P activity." evidence="3">
    <original>Y</original>
    <variation>A</variation>
    <location>
        <position position="44"/>
    </location>
</feature>
<feature type="mutagenesis site" description="70% reconstituted RNase P activity." evidence="3">
    <original>R</original>
    <variation>A</variation>
    <location>
        <position position="65"/>
    </location>
</feature>
<feature type="mutagenesis site" description="Does not reconstitute RNase P activity. Protein destabilized." evidence="3">
    <original>CKRC</original>
    <variation>SKRS</variation>
    <location>
        <begin position="68"/>
        <end position="71"/>
    </location>
</feature>
<feature type="mutagenesis site" description="10% reconstituted RNase P activity." evidence="3">
    <original>K</original>
    <variation>A</variation>
    <location>
        <position position="69"/>
    </location>
</feature>
<feature type="mutagenesis site" description="50% reconstituted RNase P activity." evidence="3">
    <original>R</original>
    <variation>A</variation>
    <location>
        <position position="84"/>
    </location>
</feature>
<feature type="mutagenesis site" description="20% reconstituted RNase P activity." evidence="3">
    <original>R</original>
    <variation>A</variation>
    <location>
        <position position="86"/>
    </location>
</feature>
<feature type="mutagenesis site" description="Does not reconstitute RNase P activity. Protein destabilized." evidence="3">
    <original>CLEC</original>
    <variation>SLES</variation>
    <location>
        <begin position="97"/>
        <end position="100"/>
    </location>
</feature>
<feature type="mutagenesis site" description="Does not reconstitute RNase P activity." evidence="3">
    <original>R</original>
    <variation>A</variation>
    <location>
        <position position="105"/>
    </location>
</feature>
<feature type="helix" evidence="7">
    <location>
        <begin position="5"/>
        <end position="34"/>
    </location>
</feature>
<feature type="helix" evidence="7">
    <location>
        <begin position="38"/>
        <end position="55"/>
    </location>
</feature>
<feature type="turn" evidence="7">
    <location>
        <begin position="61"/>
        <end position="65"/>
    </location>
</feature>
<feature type="turn" evidence="7">
    <location>
        <begin position="69"/>
        <end position="71"/>
    </location>
</feature>
<feature type="turn" evidence="7">
    <location>
        <begin position="77"/>
        <end position="79"/>
    </location>
</feature>
<feature type="strand" evidence="7">
    <location>
        <begin position="80"/>
        <end position="86"/>
    </location>
</feature>
<feature type="strand" evidence="7">
    <location>
        <begin position="88"/>
        <end position="90"/>
    </location>
</feature>
<feature type="strand" evidence="7">
    <location>
        <begin position="92"/>
        <end position="97"/>
    </location>
</feature>
<feature type="turn" evidence="7">
    <location>
        <begin position="98"/>
        <end position="100"/>
    </location>
</feature>
<feature type="strand" evidence="7">
    <location>
        <begin position="103"/>
        <end position="107"/>
    </location>
</feature>
<protein>
    <recommendedName>
        <fullName evidence="1">Ribonuclease P protein component 4</fullName>
        <shortName evidence="1">RNase P component 4</shortName>
        <ecNumber evidence="1">3.1.26.5</ecNumber>
    </recommendedName>
    <alternativeName>
        <fullName evidence="1">Rpp21</fullName>
    </alternativeName>
</protein>
<comment type="function">
    <text evidence="1 2 3 4 5 6">Part of ribonuclease P, a protein complex that generates mature tRNA molecules by cleaving their 5'-ends. Binds RNase P RNA.</text>
</comment>
<comment type="catalytic activity">
    <reaction evidence="1">
        <text>Endonucleolytic cleavage of RNA, removing 5'-extranucleotides from tRNA precursor.</text>
        <dbReference type="EC" id="3.1.26.5"/>
    </reaction>
</comment>
<comment type="cofactor">
    <cofactor evidence="1 3 6">
        <name>Zn(2+)</name>
        <dbReference type="ChEBI" id="CHEBI:29105"/>
    </cofactor>
    <text evidence="1 3 6">Binds 1 zinc ion per subunit.</text>
</comment>
<comment type="biophysicochemical properties">
    <temperatureDependence>
        <text evidence="2 4">Optimum temperature is 70 degrees Celsius.</text>
    </temperatureDependence>
</comment>
<comment type="subunit">
    <text evidence="2 3 4 5 6">Consists of a catalytic RNA component and at least 5 protein subunits. Forms a heterodimeric subcomplex with Rnp1. Reconstituted enzyme missing individual protein subunits is suboptimally active, showing each subunit contributes to optimization of activity.</text>
</comment>
<comment type="interaction">
    <interactant intactId="EBI-2641275">
        <id>O59248</id>
    </interactant>
    <interactant intactId="EBI-2603177">
        <id>O59150</id>
        <label>rnp2</label>
    </interactant>
    <organismsDiffer>false</organismsDiffer>
    <experiments>3</experiments>
</comment>
<comment type="subcellular location">
    <subcellularLocation>
        <location evidence="1">Cytoplasm</location>
    </subcellularLocation>
</comment>
<comment type="similarity">
    <text evidence="1">Belongs to the eukaryotic/archaeal RNase P protein component 4 family.</text>
</comment>
<proteinExistence type="evidence at protein level"/>
<sequence length="120" mass="14589">MVDIVKRRDWEKKEKKKIAIERIDTLFTLAERVARYSPDLAKRYVELALEIQKKAKVKIPRKWKRRYCKRCHTFLIPGVNARVRLRTKRMPHVVITCLECGYIMRYPYLREVKQKRKKAT</sequence>
<accession>O59248</accession>
<keyword id="KW-0002">3D-structure</keyword>
<keyword id="KW-0963">Cytoplasm</keyword>
<keyword id="KW-0255">Endonuclease</keyword>
<keyword id="KW-0378">Hydrolase</keyword>
<keyword id="KW-0479">Metal-binding</keyword>
<keyword id="KW-0540">Nuclease</keyword>
<keyword id="KW-0819">tRNA processing</keyword>
<keyword id="KW-0862">Zinc</keyword>